<sequence length="557" mass="61301">MVSKLTSLQQELLSALLSSGVTKEVLVQALEELLPSPNFGVKLETLPLSPGSGAEPDTKPVFHTLTNGHAKGRLSGDEGSEDGDDYDTPPILKELQALNTEEAAEQRAEVDRMLSEDPWRAAKMIKGYMQQHNIPQREVVDVTGLNQSHLSQHLNKGTPMKTQKRAALYTWYVRKQREILRQFNQTVQSSGNMTDKSSQDQLLFLFPEFSQQSQGPGQSDDACSEPTNKKMRRNRFKWGPASQQILYQAYDRQKNPSKEEREALVEECNRAECLQRGVSPSKAHGLGSNLVTEVRVYNWFANRRKEEAFRQKLAMDAYSSNQTHSLNPLLSHGSPHHQPSSSPPNKLSGVRYSQQGNNEVTSSSTISHHGNSAMVTSQSVLQQVSPASLDPGHNLLSPDGKMISVSGGGLPPVSTLTNIHSLSHHNPQQSQNLIMTPLSGVMAIAQSLNTSQAQSVPVINSVAGSLAALQPVQFSQQLHSPHQQPLMQQSPGSHMAQQPFMAAVTQLQNSHMYAHKQEPPQYSHTSRFPSAMVVTDTSSISTLTNMSSSKQCPLQAW</sequence>
<comment type="function">
    <text evidence="3 4">Transcription factor that binds to the inverted palindrome 5'-GTTAATNATTAAC-3' (By similarity). Binds to the FPC element in the cAMP regulatory unit of the PLAU gene (By similarity). Transcriptional activity is increased by coactivator PCBD1 (By similarity).</text>
</comment>
<comment type="subunit">
    <text evidence="3">Binds DNA as a dimer. Can form homodimer or heterodimer with HNF1-alpha (By similarity). Interacts (via HNF-p1 domain) with PCBD1; the interaction increases its transactivation activity (By similarity).</text>
</comment>
<comment type="subcellular location">
    <subcellularLocation>
        <location evidence="5">Nucleus</location>
    </subcellularLocation>
</comment>
<comment type="similarity">
    <text evidence="9">Belongs to the HNF1 homeobox family.</text>
</comment>
<dbReference type="EMBL" id="CR857451">
    <property type="protein sequence ID" value="CAH89742.1"/>
    <property type="molecule type" value="mRNA"/>
</dbReference>
<dbReference type="RefSeq" id="NP_001124797.1">
    <property type="nucleotide sequence ID" value="NM_001131325.1"/>
</dbReference>
<dbReference type="SMR" id="Q5RER5"/>
<dbReference type="FunCoup" id="Q5RER5">
    <property type="interactions" value="1239"/>
</dbReference>
<dbReference type="STRING" id="9601.ENSPPYP00000009240"/>
<dbReference type="Ensembl" id="ENSPPYT00000009614.2">
    <property type="protein sequence ID" value="ENSPPYP00000009240.1"/>
    <property type="gene ID" value="ENSPPYG00000008222.2"/>
</dbReference>
<dbReference type="GeneID" id="100171651"/>
<dbReference type="KEGG" id="pon:100171651"/>
<dbReference type="CTD" id="6928"/>
<dbReference type="eggNOG" id="ENOG502QRPW">
    <property type="taxonomic scope" value="Eukaryota"/>
</dbReference>
<dbReference type="GeneTree" id="ENSGT00940000153818"/>
<dbReference type="HOGENOM" id="CLU_035503_0_0_1"/>
<dbReference type="InParanoid" id="Q5RER5"/>
<dbReference type="OMA" id="GQSDDTC"/>
<dbReference type="OrthoDB" id="10069265at2759"/>
<dbReference type="TreeFam" id="TF320327"/>
<dbReference type="Proteomes" id="UP000001595">
    <property type="component" value="Chromosome 17"/>
</dbReference>
<dbReference type="GO" id="GO:0005829">
    <property type="term" value="C:cytosol"/>
    <property type="evidence" value="ECO:0007669"/>
    <property type="project" value="Ensembl"/>
</dbReference>
<dbReference type="GO" id="GO:0005654">
    <property type="term" value="C:nucleoplasm"/>
    <property type="evidence" value="ECO:0007669"/>
    <property type="project" value="Ensembl"/>
</dbReference>
<dbReference type="GO" id="GO:0005634">
    <property type="term" value="C:nucleus"/>
    <property type="evidence" value="ECO:0000250"/>
    <property type="project" value="UniProtKB"/>
</dbReference>
<dbReference type="GO" id="GO:0005667">
    <property type="term" value="C:transcription regulator complex"/>
    <property type="evidence" value="ECO:0007669"/>
    <property type="project" value="Ensembl"/>
</dbReference>
<dbReference type="GO" id="GO:0003700">
    <property type="term" value="F:DNA-binding transcription factor activity"/>
    <property type="evidence" value="ECO:0000250"/>
    <property type="project" value="UniProtKB"/>
</dbReference>
<dbReference type="GO" id="GO:0000981">
    <property type="term" value="F:DNA-binding transcription factor activity, RNA polymerase II-specific"/>
    <property type="evidence" value="ECO:0007669"/>
    <property type="project" value="Ensembl"/>
</dbReference>
<dbReference type="GO" id="GO:1990841">
    <property type="term" value="F:promoter-specific chromatin binding"/>
    <property type="evidence" value="ECO:0007669"/>
    <property type="project" value="Ensembl"/>
</dbReference>
<dbReference type="GO" id="GO:0042803">
    <property type="term" value="F:protein homodimerization activity"/>
    <property type="evidence" value="ECO:0000250"/>
    <property type="project" value="UniProtKB"/>
</dbReference>
<dbReference type="GO" id="GO:0000978">
    <property type="term" value="F:RNA polymerase II cis-regulatory region sequence-specific DNA binding"/>
    <property type="evidence" value="ECO:0007669"/>
    <property type="project" value="TreeGrafter"/>
</dbReference>
<dbReference type="GO" id="GO:0009952">
    <property type="term" value="P:anterior/posterior pattern specification"/>
    <property type="evidence" value="ECO:0007669"/>
    <property type="project" value="Ensembl"/>
</dbReference>
<dbReference type="GO" id="GO:0048754">
    <property type="term" value="P:branching morphogenesis of an epithelial tube"/>
    <property type="evidence" value="ECO:0007669"/>
    <property type="project" value="Ensembl"/>
</dbReference>
<dbReference type="GO" id="GO:0048557">
    <property type="term" value="P:embryonic digestive tract morphogenesis"/>
    <property type="evidence" value="ECO:0007669"/>
    <property type="project" value="Ensembl"/>
</dbReference>
<dbReference type="GO" id="GO:0031018">
    <property type="term" value="P:endocrine pancreas development"/>
    <property type="evidence" value="ECO:0000250"/>
    <property type="project" value="UniProtKB"/>
</dbReference>
<dbReference type="GO" id="GO:0001714">
    <property type="term" value="P:endodermal cell fate specification"/>
    <property type="evidence" value="ECO:0007669"/>
    <property type="project" value="Ensembl"/>
</dbReference>
<dbReference type="GO" id="GO:0050673">
    <property type="term" value="P:epithelial cell proliferation"/>
    <property type="evidence" value="ECO:0007669"/>
    <property type="project" value="Ensembl"/>
</dbReference>
<dbReference type="GO" id="GO:0010467">
    <property type="term" value="P:gene expression"/>
    <property type="evidence" value="ECO:0007669"/>
    <property type="project" value="Ensembl"/>
</dbReference>
<dbReference type="GO" id="GO:0048806">
    <property type="term" value="P:genitalia development"/>
    <property type="evidence" value="ECO:0000250"/>
    <property type="project" value="UniProtKB"/>
</dbReference>
<dbReference type="GO" id="GO:0061017">
    <property type="term" value="P:hepatoblast differentiation"/>
    <property type="evidence" value="ECO:0007669"/>
    <property type="project" value="Ensembl"/>
</dbReference>
<dbReference type="GO" id="GO:0030902">
    <property type="term" value="P:hindbrain development"/>
    <property type="evidence" value="ECO:0007669"/>
    <property type="project" value="Ensembl"/>
</dbReference>
<dbReference type="GO" id="GO:0001826">
    <property type="term" value="P:inner cell mass cell differentiation"/>
    <property type="evidence" value="ECO:0007669"/>
    <property type="project" value="Ensembl"/>
</dbReference>
<dbReference type="GO" id="GO:0030073">
    <property type="term" value="P:insulin secretion"/>
    <property type="evidence" value="ECO:0007669"/>
    <property type="project" value="Ensembl"/>
</dbReference>
<dbReference type="GO" id="GO:0001822">
    <property type="term" value="P:kidney development"/>
    <property type="evidence" value="ECO:0000250"/>
    <property type="project" value="UniProtKB"/>
</dbReference>
<dbReference type="GO" id="GO:1900200">
    <property type="term" value="P:mesenchymal cell apoptotic process involved in metanephros development"/>
    <property type="evidence" value="ECO:0007669"/>
    <property type="project" value="Ensembl"/>
</dbReference>
<dbReference type="GO" id="GO:0072181">
    <property type="term" value="P:mesonephric duct formation"/>
    <property type="evidence" value="ECO:0007669"/>
    <property type="project" value="Ensembl"/>
</dbReference>
<dbReference type="GO" id="GO:0061296">
    <property type="term" value="P:negative regulation of mesenchymal cell apoptotic process involved in mesonephric nephron morphogenesis"/>
    <property type="evidence" value="ECO:0007669"/>
    <property type="project" value="Ensembl"/>
</dbReference>
<dbReference type="GO" id="GO:1900212">
    <property type="term" value="P:negative regulation of mesenchymal cell apoptotic process involved in metanephros development"/>
    <property type="evidence" value="ECO:0007669"/>
    <property type="project" value="Ensembl"/>
</dbReference>
<dbReference type="GO" id="GO:0000122">
    <property type="term" value="P:negative regulation of transcription by RNA polymerase II"/>
    <property type="evidence" value="ECO:0007669"/>
    <property type="project" value="Ensembl"/>
</dbReference>
<dbReference type="GO" id="GO:0007219">
    <property type="term" value="P:Notch signaling pathway"/>
    <property type="evidence" value="ECO:0007669"/>
    <property type="project" value="Ensembl"/>
</dbReference>
<dbReference type="GO" id="GO:0045893">
    <property type="term" value="P:positive regulation of DNA-templated transcription"/>
    <property type="evidence" value="ECO:0000250"/>
    <property type="project" value="UniProtKB"/>
</dbReference>
<dbReference type="GO" id="GO:0010628">
    <property type="term" value="P:positive regulation of gene expression"/>
    <property type="evidence" value="ECO:0007669"/>
    <property type="project" value="Ensembl"/>
</dbReference>
<dbReference type="GO" id="GO:0060261">
    <property type="term" value="P:positive regulation of transcription initiation by RNA polymerase II"/>
    <property type="evidence" value="ECO:0007669"/>
    <property type="project" value="Ensembl"/>
</dbReference>
<dbReference type="GO" id="GO:0039020">
    <property type="term" value="P:pronephric nephron tubule development"/>
    <property type="evidence" value="ECO:0007669"/>
    <property type="project" value="Ensembl"/>
</dbReference>
<dbReference type="GO" id="GO:0072095">
    <property type="term" value="P:regulation of branch elongation involved in ureteric bud branching"/>
    <property type="evidence" value="ECO:0007669"/>
    <property type="project" value="Ensembl"/>
</dbReference>
<dbReference type="GO" id="GO:0035565">
    <property type="term" value="P:regulation of pronephros size"/>
    <property type="evidence" value="ECO:0007669"/>
    <property type="project" value="Ensembl"/>
</dbReference>
<dbReference type="GO" id="GO:0030111">
    <property type="term" value="P:regulation of Wnt signaling pathway"/>
    <property type="evidence" value="ECO:0007669"/>
    <property type="project" value="Ensembl"/>
</dbReference>
<dbReference type="GO" id="GO:0009749">
    <property type="term" value="P:response to glucose"/>
    <property type="evidence" value="ECO:0007669"/>
    <property type="project" value="Ensembl"/>
</dbReference>
<dbReference type="GO" id="GO:0060677">
    <property type="term" value="P:ureteric bud elongation"/>
    <property type="evidence" value="ECO:0007669"/>
    <property type="project" value="Ensembl"/>
</dbReference>
<dbReference type="CDD" id="cd00086">
    <property type="entry name" value="homeodomain"/>
    <property type="match status" value="1"/>
</dbReference>
<dbReference type="FunFam" id="1.10.10.60:FF:000043">
    <property type="entry name" value="Hepatocyte nuclear factor 1-beta"/>
    <property type="match status" value="1"/>
</dbReference>
<dbReference type="FunFam" id="1.10.260.40:FF:000009">
    <property type="entry name" value="Hepatocyte nuclear factor 1-beta"/>
    <property type="match status" value="1"/>
</dbReference>
<dbReference type="Gene3D" id="1.10.10.60">
    <property type="entry name" value="Homeodomain-like"/>
    <property type="match status" value="1"/>
</dbReference>
<dbReference type="Gene3D" id="1.10.260.40">
    <property type="entry name" value="lambda repressor-like DNA-binding domains"/>
    <property type="match status" value="1"/>
</dbReference>
<dbReference type="InterPro" id="IPR001356">
    <property type="entry name" value="HD"/>
</dbReference>
<dbReference type="InterPro" id="IPR039066">
    <property type="entry name" value="HNF-1"/>
</dbReference>
<dbReference type="InterPro" id="IPR006899">
    <property type="entry name" value="HNF-1_N"/>
</dbReference>
<dbReference type="InterPro" id="IPR044869">
    <property type="entry name" value="HNF-1_POU"/>
</dbReference>
<dbReference type="InterPro" id="IPR023219">
    <property type="entry name" value="HNF1_dimer_N_dom_sf"/>
</dbReference>
<dbReference type="InterPro" id="IPR006897">
    <property type="entry name" value="HNF1b_C"/>
</dbReference>
<dbReference type="InterPro" id="IPR044866">
    <property type="entry name" value="HNF_P1"/>
</dbReference>
<dbReference type="InterPro" id="IPR009057">
    <property type="entry name" value="Homeodomain-like_sf"/>
</dbReference>
<dbReference type="InterPro" id="IPR010982">
    <property type="entry name" value="Lambda_DNA-bd_dom_sf"/>
</dbReference>
<dbReference type="PANTHER" id="PTHR11568">
    <property type="entry name" value="HEPATOCYTE NUCLEAR FACTOR 1"/>
    <property type="match status" value="1"/>
</dbReference>
<dbReference type="PANTHER" id="PTHR11568:SF2">
    <property type="entry name" value="HEPATOCYTE NUCLEAR FACTOR 1-BETA"/>
    <property type="match status" value="1"/>
</dbReference>
<dbReference type="Pfam" id="PF04814">
    <property type="entry name" value="HNF-1_N"/>
    <property type="match status" value="1"/>
</dbReference>
<dbReference type="Pfam" id="PF04812">
    <property type="entry name" value="HNF-1B_C"/>
    <property type="match status" value="1"/>
</dbReference>
<dbReference type="SMART" id="SM00389">
    <property type="entry name" value="HOX"/>
    <property type="match status" value="1"/>
</dbReference>
<dbReference type="SUPFAM" id="SSF100957">
    <property type="entry name" value="Dimerization cofactor of HNF-1 alpha"/>
    <property type="match status" value="1"/>
</dbReference>
<dbReference type="SUPFAM" id="SSF46689">
    <property type="entry name" value="Homeodomain-like"/>
    <property type="match status" value="1"/>
</dbReference>
<dbReference type="SUPFAM" id="SSF47413">
    <property type="entry name" value="lambda repressor-like DNA-binding domains"/>
    <property type="match status" value="1"/>
</dbReference>
<dbReference type="PROSITE" id="PS51937">
    <property type="entry name" value="HNF_P1"/>
    <property type="match status" value="1"/>
</dbReference>
<dbReference type="PROSITE" id="PS00027">
    <property type="entry name" value="HOMEOBOX_1"/>
    <property type="match status" value="1"/>
</dbReference>
<dbReference type="PROSITE" id="PS50071">
    <property type="entry name" value="HOMEOBOX_2"/>
    <property type="match status" value="1"/>
</dbReference>
<dbReference type="PROSITE" id="PS51936">
    <property type="entry name" value="POU_4"/>
    <property type="match status" value="1"/>
</dbReference>
<evidence type="ECO:0000250" key="1"/>
<evidence type="ECO:0000250" key="2">
    <source>
        <dbReference type="UniProtKB" id="P27889"/>
    </source>
</evidence>
<evidence type="ECO:0000250" key="3">
    <source>
        <dbReference type="UniProtKB" id="P35680"/>
    </source>
</evidence>
<evidence type="ECO:0000250" key="4">
    <source>
        <dbReference type="UniProtKB" id="Q03365"/>
    </source>
</evidence>
<evidence type="ECO:0000255" key="5">
    <source>
        <dbReference type="PROSITE-ProRule" id="PRU00108"/>
    </source>
</evidence>
<evidence type="ECO:0000255" key="6">
    <source>
        <dbReference type="PROSITE-ProRule" id="PRU01285"/>
    </source>
</evidence>
<evidence type="ECO:0000255" key="7">
    <source>
        <dbReference type="PROSITE-ProRule" id="PRU01286"/>
    </source>
</evidence>
<evidence type="ECO:0000256" key="8">
    <source>
        <dbReference type="SAM" id="MobiDB-lite"/>
    </source>
</evidence>
<evidence type="ECO:0000305" key="9"/>
<protein>
    <recommendedName>
        <fullName>Hepatocyte nuclear factor 1-beta</fullName>
        <shortName>HNF-1-beta</shortName>
        <shortName>HNF-1B</shortName>
    </recommendedName>
    <alternativeName>
        <fullName>Transcription factor 2</fullName>
        <shortName>TCF-2</shortName>
    </alternativeName>
</protein>
<organism>
    <name type="scientific">Pongo abelii</name>
    <name type="common">Sumatran orangutan</name>
    <name type="synonym">Pongo pygmaeus abelii</name>
    <dbReference type="NCBI Taxonomy" id="9601"/>
    <lineage>
        <taxon>Eukaryota</taxon>
        <taxon>Metazoa</taxon>
        <taxon>Chordata</taxon>
        <taxon>Craniata</taxon>
        <taxon>Vertebrata</taxon>
        <taxon>Euteleostomi</taxon>
        <taxon>Mammalia</taxon>
        <taxon>Eutheria</taxon>
        <taxon>Euarchontoglires</taxon>
        <taxon>Primates</taxon>
        <taxon>Haplorrhini</taxon>
        <taxon>Catarrhini</taxon>
        <taxon>Hominidae</taxon>
        <taxon>Pongo</taxon>
    </lineage>
</organism>
<proteinExistence type="evidence at transcript level"/>
<accession>Q5RER5</accession>
<name>HNF1B_PONAB</name>
<keyword id="KW-0010">Activator</keyword>
<keyword id="KW-0238">DNA-binding</keyword>
<keyword id="KW-0371">Homeobox</keyword>
<keyword id="KW-0539">Nucleus</keyword>
<keyword id="KW-0597">Phosphoprotein</keyword>
<keyword id="KW-1185">Reference proteome</keyword>
<keyword id="KW-0804">Transcription</keyword>
<keyword id="KW-0805">Transcription regulation</keyword>
<reference key="1">
    <citation type="submission" date="2004-11" db="EMBL/GenBank/DDBJ databases">
        <authorList>
            <consortium name="The German cDNA consortium"/>
        </authorList>
    </citation>
    <scope>NUCLEOTIDE SEQUENCE [LARGE SCALE MRNA]</scope>
    <source>
        <tissue>Kidney</tissue>
    </source>
</reference>
<gene>
    <name type="primary">HNF1B</name>
    <name type="synonym">TCF2</name>
</gene>
<feature type="chain" id="PRO_0000343422" description="Hepatocyte nuclear factor 1-beta">
    <location>
        <begin position="1"/>
        <end position="557"/>
    </location>
</feature>
<feature type="domain" description="HNF-p1" evidence="7">
    <location>
        <begin position="1"/>
        <end position="32"/>
    </location>
</feature>
<feature type="domain" description="POU-specific atypical" evidence="6">
    <location>
        <begin position="93"/>
        <end position="188"/>
    </location>
</feature>
<feature type="DNA-binding region" description="Homeobox; HNF1-type" evidence="5">
    <location>
        <begin position="231"/>
        <end position="311"/>
    </location>
</feature>
<feature type="region of interest" description="Dimerization" evidence="1">
    <location>
        <begin position="1"/>
        <end position="31"/>
    </location>
</feature>
<feature type="region of interest" description="Disordered" evidence="8">
    <location>
        <begin position="64"/>
        <end position="85"/>
    </location>
</feature>
<feature type="region of interest" description="Disordered" evidence="8">
    <location>
        <begin position="324"/>
        <end position="370"/>
    </location>
</feature>
<feature type="compositionally biased region" description="Low complexity" evidence="8">
    <location>
        <begin position="328"/>
        <end position="344"/>
    </location>
</feature>
<feature type="compositionally biased region" description="Polar residues" evidence="8">
    <location>
        <begin position="351"/>
        <end position="370"/>
    </location>
</feature>
<feature type="modified residue" description="Phosphoserine" evidence="2">
    <location>
        <position position="49"/>
    </location>
</feature>
<feature type="modified residue" description="Phosphoserine" evidence="2">
    <location>
        <position position="52"/>
    </location>
</feature>
<feature type="modified residue" description="Phosphoserine" evidence="2">
    <location>
        <position position="75"/>
    </location>
</feature>
<feature type="modified residue" description="Phosphoserine" evidence="2">
    <location>
        <position position="80"/>
    </location>
</feature>